<protein>
    <recommendedName>
        <fullName evidence="1">RNA-directed RNA polymerase catalytic subunit</fullName>
        <ecNumber evidence="1">2.7.7.48</ecNumber>
    </recommendedName>
    <alternativeName>
        <fullName evidence="1">Polymerase basic protein 1</fullName>
        <shortName evidence="1">PB1</shortName>
    </alternativeName>
    <alternativeName>
        <fullName evidence="1">RNA-directed RNA polymerase subunit P1</fullName>
    </alternativeName>
</protein>
<accession>P26118</accession>
<gene>
    <name evidence="1" type="primary">PB1</name>
</gene>
<evidence type="ECO:0000255" key="1">
    <source>
        <dbReference type="HAMAP-Rule" id="MF_04065"/>
    </source>
</evidence>
<evidence type="ECO:0000256" key="2">
    <source>
        <dbReference type="SAM" id="MobiDB-lite"/>
    </source>
</evidence>
<reference key="1">
    <citation type="submission" date="1992-08" db="EMBL/GenBank/DDBJ databases">
        <title>Extragenic suppression of the ts phenotype coded for by RNA1 (PB2) of caA/AA/6/60-H2N2 influenza virus.</title>
        <authorList>
            <person name="Herlocher M.L."/>
            <person name="Shaw M.W."/>
            <person name="Maassab H.F."/>
        </authorList>
    </citation>
    <scope>NUCLEOTIDE SEQUENCE [GENOMIC RNA]</scope>
</reference>
<proteinExistence type="inferred from homology"/>
<name>RDRP_I73A6</name>
<feature type="chain" id="PRO_0000078748" description="RNA-directed RNA polymerase catalytic subunit">
    <location>
        <begin position="1"/>
        <end position="757"/>
    </location>
</feature>
<feature type="domain" description="RdRp catalytic" evidence="1">
    <location>
        <begin position="286"/>
        <end position="483"/>
    </location>
</feature>
<feature type="region of interest" description="Disordered" evidence="2">
    <location>
        <begin position="50"/>
        <end position="79"/>
    </location>
</feature>
<feature type="region of interest" description="Promoter-binding site" evidence="1">
    <location>
        <begin position="249"/>
        <end position="256"/>
    </location>
</feature>
<feature type="short sequence motif" description="Nuclear localization signal" evidence="1">
    <location>
        <begin position="187"/>
        <end position="195"/>
    </location>
</feature>
<feature type="short sequence motif" description="Nuclear localization signal" evidence="1">
    <location>
        <begin position="203"/>
        <end position="216"/>
    </location>
</feature>
<feature type="compositionally biased region" description="Polar residues" evidence="2">
    <location>
        <begin position="55"/>
        <end position="64"/>
    </location>
</feature>
<comment type="function">
    <text evidence="1">RNA-dependent RNA polymerase which is responsible for replication and transcription of virus RNA segments. The transcription of viral mRNAs occurs by a unique mechanism called cap-snatching. 5' methylated caps of cellular mRNAs are cleaved after 10-13 nucleotides by PA. In turn, these short capped RNAs are used as primers by PB1 for transcription of viral mRNAs. During virus replication, PB1 initiates RNA synthesis and copy vRNA into complementary RNA (cRNA) which in turn serves as a template for the production of more vRNAs.</text>
</comment>
<comment type="catalytic activity">
    <reaction evidence="1">
        <text>RNA(n) + a ribonucleoside 5'-triphosphate = RNA(n+1) + diphosphate</text>
        <dbReference type="Rhea" id="RHEA:21248"/>
        <dbReference type="Rhea" id="RHEA-COMP:14527"/>
        <dbReference type="Rhea" id="RHEA-COMP:17342"/>
        <dbReference type="ChEBI" id="CHEBI:33019"/>
        <dbReference type="ChEBI" id="CHEBI:61557"/>
        <dbReference type="ChEBI" id="CHEBI:140395"/>
        <dbReference type="EC" id="2.7.7.48"/>
    </reaction>
</comment>
<comment type="subunit">
    <text evidence="1">Influenza RNA polymerase is composed of three subunits: PB1, PB2 and PA. Interacts (via N-terminus) with PA (via C-terminus). Interacts (via C-terminus) with PB2 (via N-terminus); this interaction is essential for transcription initiation.</text>
</comment>
<comment type="subcellular location">
    <subcellularLocation>
        <location evidence="1">Host nucleus</location>
    </subcellularLocation>
    <subcellularLocation>
        <location evidence="1">Host cytoplasm</location>
    </subcellularLocation>
</comment>
<comment type="PTM">
    <text evidence="1">Phosphorylated by host PRKCA.</text>
</comment>
<comment type="similarity">
    <text evidence="1">Belongs to the influenza viruses polymerase PB1 family.</text>
</comment>
<dbReference type="EC" id="2.7.7.48" evidence="1"/>
<dbReference type="EMBL" id="M74899">
    <property type="protein sequence ID" value="AAA43631.1"/>
    <property type="molecule type" value="Genomic_RNA"/>
</dbReference>
<dbReference type="SMR" id="P26118"/>
<dbReference type="GO" id="GO:0030430">
    <property type="term" value="C:host cell cytoplasm"/>
    <property type="evidence" value="ECO:0007669"/>
    <property type="project" value="UniProtKB-SubCell"/>
</dbReference>
<dbReference type="GO" id="GO:0042025">
    <property type="term" value="C:host cell nucleus"/>
    <property type="evidence" value="ECO:0007669"/>
    <property type="project" value="UniProtKB-SubCell"/>
</dbReference>
<dbReference type="GO" id="GO:0000166">
    <property type="term" value="F:nucleotide binding"/>
    <property type="evidence" value="ECO:0007669"/>
    <property type="project" value="UniProtKB-UniRule"/>
</dbReference>
<dbReference type="GO" id="GO:0003723">
    <property type="term" value="F:RNA binding"/>
    <property type="evidence" value="ECO:0007669"/>
    <property type="project" value="InterPro"/>
</dbReference>
<dbReference type="GO" id="GO:0003968">
    <property type="term" value="F:RNA-directed RNA polymerase activity"/>
    <property type="evidence" value="ECO:0007669"/>
    <property type="project" value="UniProtKB-UniRule"/>
</dbReference>
<dbReference type="GO" id="GO:0006351">
    <property type="term" value="P:DNA-templated transcription"/>
    <property type="evidence" value="ECO:0007669"/>
    <property type="project" value="UniProtKB-UniRule"/>
</dbReference>
<dbReference type="GO" id="GO:0039657">
    <property type="term" value="P:symbiont-mediated suppression of host gene expression"/>
    <property type="evidence" value="ECO:0007669"/>
    <property type="project" value="UniProtKB-KW"/>
</dbReference>
<dbReference type="GO" id="GO:0039523">
    <property type="term" value="P:symbiont-mediated suppression of host mRNA transcription via inhibition of RNA polymerase II activity"/>
    <property type="evidence" value="ECO:0007669"/>
    <property type="project" value="UniProtKB-UniRule"/>
</dbReference>
<dbReference type="GO" id="GO:0039694">
    <property type="term" value="P:viral RNA genome replication"/>
    <property type="evidence" value="ECO:0007669"/>
    <property type="project" value="UniProtKB-UniRule"/>
</dbReference>
<dbReference type="GO" id="GO:0019083">
    <property type="term" value="P:viral transcription"/>
    <property type="evidence" value="ECO:0007669"/>
    <property type="project" value="UniProtKB-KW"/>
</dbReference>
<dbReference type="Gene3D" id="6.10.140.720">
    <property type="match status" value="1"/>
</dbReference>
<dbReference type="HAMAP" id="MF_04065">
    <property type="entry name" value="INFV_RDRP"/>
    <property type="match status" value="1"/>
</dbReference>
<dbReference type="InterPro" id="IPR007099">
    <property type="entry name" value="RNA-dir_pol_NSvirus"/>
</dbReference>
<dbReference type="InterPro" id="IPR001407">
    <property type="entry name" value="RNA_pol_PB1_influenza"/>
</dbReference>
<dbReference type="Pfam" id="PF00602">
    <property type="entry name" value="Flu_PB1"/>
    <property type="match status" value="1"/>
</dbReference>
<dbReference type="PIRSF" id="PIRSF000827">
    <property type="entry name" value="RdRPol_OMV"/>
    <property type="match status" value="1"/>
</dbReference>
<dbReference type="PROSITE" id="PS50525">
    <property type="entry name" value="RDRP_SSRNA_NEG_SEG"/>
    <property type="match status" value="1"/>
</dbReference>
<keyword id="KW-1262">Eukaryotic host gene expression shutoff by virus</keyword>
<keyword id="KW-1191">Eukaryotic host transcription shutoff by virus</keyword>
<keyword id="KW-1035">Host cytoplasm</keyword>
<keyword id="KW-1190">Host gene expression shutoff by virus</keyword>
<keyword id="KW-1048">Host nucleus</keyword>
<keyword id="KW-0945">Host-virus interaction</keyword>
<keyword id="KW-1104">Inhibition of host RNA polymerase II by virus</keyword>
<keyword id="KW-0547">Nucleotide-binding</keyword>
<keyword id="KW-0548">Nucleotidyltransferase</keyword>
<keyword id="KW-0597">Phosphoprotein</keyword>
<keyword id="KW-0696">RNA-directed RNA polymerase</keyword>
<keyword id="KW-0808">Transferase</keyword>
<keyword id="KW-0693">Viral RNA replication</keyword>
<keyword id="KW-1195">Viral transcription</keyword>
<organism>
    <name type="scientific">Influenza A virus (strain A/Dunedin/4/1973 H3N2)</name>
    <dbReference type="NCBI Taxonomy" id="11375"/>
    <lineage>
        <taxon>Viruses</taxon>
        <taxon>Riboviria</taxon>
        <taxon>Orthornavirae</taxon>
        <taxon>Negarnaviricota</taxon>
        <taxon>Polyploviricotina</taxon>
        <taxon>Insthoviricetes</taxon>
        <taxon>Articulavirales</taxon>
        <taxon>Orthomyxoviridae</taxon>
        <taxon>Alphainfluenzavirus</taxon>
        <taxon>Alphainfluenzavirus influenzae</taxon>
        <taxon>Influenza A virus</taxon>
    </lineage>
</organism>
<sequence>MDVNPTLLFLKVPAQNAISTTFPYTGDPPYSHGTGTGYTMDTVNRTHQYSEKGKWTTNTETGEPQLNPIDGPLPEDNEQSGYAQQDCVLEAMAFLEESHPGIFENSCLETMEVVQQTRVDRLTQGRQTYDWTLNRNQPAATALANTIEVFRSNGLTANESGRLIDFLKDVMESMDKEEMEITTHFQRKRRVRDNMTKKMVTQRTIGKKKQRVNKRSYLIRALTLNTMTKDAERGKLKRRAIATPGMQIRGFVYFVETLARSICEKLEQSGLPVGGNEKKAKLANVVRKMMTNSQDTELSFTITGDNTKWNENQNPRMFLAMMTYITKNQPEWFRNILSIAPIMFSNKMARLGKGYMFESKRMKLRTQIPAEMLASIDLKYFNESTRKKIEKIRPLLRDGTASLSPGMMMGMFNMLSTVLGVSILNLGQKKYTKTTYWWDGLQSSDDFALIVNAPNHEGIQAGVDRFYRTCKLVGINMSKKKSYINRTGTFEFTSFFYRYGFVANFSMELPSFGVSGINESADMSIGVTVIKNNMINNDLGPATAQMALQLFIKDYRYTYRCHRGHTQIQTRRSFELKKLWEQTRSKAGLFVSDGGPNLYNIRNLHIPEVCLKWELMDEDYQGRLCNPLNPFVSHKEIESVNNAVVMPAHGPAKSMEYDAVATTHSWIPKRNRSILNTSQRGILEDGQMYQKCCNLFEKFFPSSSYRRPVGISSMVEAMVSRARIDARIDFEAGRIKKEEFSEIMKICSTIEELRRQK</sequence>
<organismHost>
    <name type="scientific">Aves</name>
    <dbReference type="NCBI Taxonomy" id="8782"/>
</organismHost>
<organismHost>
    <name type="scientific">Cetacea</name>
    <name type="common">whales</name>
    <dbReference type="NCBI Taxonomy" id="9721"/>
</organismHost>
<organismHost>
    <name type="scientific">Homo sapiens</name>
    <name type="common">Human</name>
    <dbReference type="NCBI Taxonomy" id="9606"/>
</organismHost>
<organismHost>
    <name type="scientific">Phocidae</name>
    <name type="common">true seals</name>
    <dbReference type="NCBI Taxonomy" id="9709"/>
</organismHost>
<organismHost>
    <name type="scientific">Sus scrofa</name>
    <name type="common">Pig</name>
    <dbReference type="NCBI Taxonomy" id="9823"/>
</organismHost>